<gene>
    <name evidence="1" type="primary">cysG</name>
    <name type="ordered locus">Mfla_0652</name>
</gene>
<name>CYSG_METFK</name>
<comment type="function">
    <text evidence="1">Multifunctional enzyme that catalyzes the SAM-dependent methylations of uroporphyrinogen III at position C-2 and C-7 to form precorrin-2 via precorrin-1. Then it catalyzes the NAD-dependent ring dehydrogenation of precorrin-2 to yield sirohydrochlorin. Finally, it catalyzes the ferrochelation of sirohydrochlorin to yield siroheme.</text>
</comment>
<comment type="catalytic activity">
    <reaction evidence="1">
        <text>uroporphyrinogen III + 2 S-adenosyl-L-methionine = precorrin-2 + 2 S-adenosyl-L-homocysteine + H(+)</text>
        <dbReference type="Rhea" id="RHEA:32459"/>
        <dbReference type="ChEBI" id="CHEBI:15378"/>
        <dbReference type="ChEBI" id="CHEBI:57308"/>
        <dbReference type="ChEBI" id="CHEBI:57856"/>
        <dbReference type="ChEBI" id="CHEBI:58827"/>
        <dbReference type="ChEBI" id="CHEBI:59789"/>
        <dbReference type="EC" id="2.1.1.107"/>
    </reaction>
</comment>
<comment type="catalytic activity">
    <reaction evidence="1">
        <text>precorrin-2 + NAD(+) = sirohydrochlorin + NADH + 2 H(+)</text>
        <dbReference type="Rhea" id="RHEA:15613"/>
        <dbReference type="ChEBI" id="CHEBI:15378"/>
        <dbReference type="ChEBI" id="CHEBI:57540"/>
        <dbReference type="ChEBI" id="CHEBI:57945"/>
        <dbReference type="ChEBI" id="CHEBI:58351"/>
        <dbReference type="ChEBI" id="CHEBI:58827"/>
        <dbReference type="EC" id="1.3.1.76"/>
    </reaction>
</comment>
<comment type="catalytic activity">
    <reaction evidence="1">
        <text>siroheme + 2 H(+) = sirohydrochlorin + Fe(2+)</text>
        <dbReference type="Rhea" id="RHEA:24360"/>
        <dbReference type="ChEBI" id="CHEBI:15378"/>
        <dbReference type="ChEBI" id="CHEBI:29033"/>
        <dbReference type="ChEBI" id="CHEBI:58351"/>
        <dbReference type="ChEBI" id="CHEBI:60052"/>
        <dbReference type="EC" id="4.99.1.4"/>
    </reaction>
</comment>
<comment type="pathway">
    <text evidence="1">Cofactor biosynthesis; adenosylcobalamin biosynthesis; precorrin-2 from uroporphyrinogen III: step 1/1.</text>
</comment>
<comment type="pathway">
    <text evidence="1">Cofactor biosynthesis; adenosylcobalamin biosynthesis; sirohydrochlorin from precorrin-2: step 1/1.</text>
</comment>
<comment type="pathway">
    <text evidence="1">Porphyrin-containing compound metabolism; siroheme biosynthesis; precorrin-2 from uroporphyrinogen III: step 1/1.</text>
</comment>
<comment type="pathway">
    <text evidence="1">Porphyrin-containing compound metabolism; siroheme biosynthesis; siroheme from sirohydrochlorin: step 1/1.</text>
</comment>
<comment type="pathway">
    <text evidence="1">Porphyrin-containing compound metabolism; siroheme biosynthesis; sirohydrochlorin from precorrin-2: step 1/1.</text>
</comment>
<comment type="similarity">
    <text evidence="1">In the N-terminal section; belongs to the precorrin-2 dehydrogenase / sirohydrochlorin ferrochelatase family.</text>
</comment>
<comment type="similarity">
    <text evidence="1">In the C-terminal section; belongs to the precorrin methyltransferase family.</text>
</comment>
<comment type="sequence caution" evidence="2">
    <conflict type="erroneous initiation">
        <sequence resource="EMBL-CDS" id="ABE48922"/>
    </conflict>
    <text>Extended N-terminus.</text>
</comment>
<organism>
    <name type="scientific">Methylobacillus flagellatus (strain ATCC 51484 / DSM 6875 / VKM B-1610 / KT)</name>
    <dbReference type="NCBI Taxonomy" id="265072"/>
    <lineage>
        <taxon>Bacteria</taxon>
        <taxon>Pseudomonadati</taxon>
        <taxon>Pseudomonadota</taxon>
        <taxon>Betaproteobacteria</taxon>
        <taxon>Nitrosomonadales</taxon>
        <taxon>Methylophilaceae</taxon>
        <taxon>Methylobacillus</taxon>
    </lineage>
</organism>
<protein>
    <recommendedName>
        <fullName evidence="1">Siroheme synthase</fullName>
    </recommendedName>
    <domain>
        <recommendedName>
            <fullName evidence="1">Uroporphyrinogen-III C-methyltransferase</fullName>
            <shortName evidence="1">Urogen III methylase</shortName>
            <ecNumber evidence="1">2.1.1.107</ecNumber>
        </recommendedName>
        <alternativeName>
            <fullName evidence="1">SUMT</fullName>
        </alternativeName>
        <alternativeName>
            <fullName evidence="1">Uroporphyrinogen III methylase</fullName>
            <shortName evidence="1">UROM</shortName>
        </alternativeName>
    </domain>
    <domain>
        <recommendedName>
            <fullName evidence="1">Precorrin-2 dehydrogenase</fullName>
            <ecNumber evidence="1">1.3.1.76</ecNumber>
        </recommendedName>
    </domain>
    <domain>
        <recommendedName>
            <fullName evidence="1">Sirohydrochlorin ferrochelatase</fullName>
            <ecNumber evidence="1">4.99.1.4</ecNumber>
        </recommendedName>
    </domain>
</protein>
<keyword id="KW-0169">Cobalamin biosynthesis</keyword>
<keyword id="KW-0456">Lyase</keyword>
<keyword id="KW-0489">Methyltransferase</keyword>
<keyword id="KW-0511">Multifunctional enzyme</keyword>
<keyword id="KW-0520">NAD</keyword>
<keyword id="KW-0560">Oxidoreductase</keyword>
<keyword id="KW-0597">Phosphoprotein</keyword>
<keyword id="KW-0627">Porphyrin biosynthesis</keyword>
<keyword id="KW-1185">Reference proteome</keyword>
<keyword id="KW-0949">S-adenosyl-L-methionine</keyword>
<keyword id="KW-0808">Transferase</keyword>
<sequence>METLPIFMKLRDRPCLVVGGGEIASRKVSLLEKAGASVTVVSPELHPTLAKSLAEGRIRHLASVFEPAQLDGAVLVIAATDDAEVNRAVSREAQARNIPVNVVDAPELCTFIVPSIVDRSPLLVAVSSGGTAPVLARMLRTRIETLIPATYGRLAAFAAEFREAVKQRFSTGQQRRIFWEDVFQGVIGEQVLSGQEEAARHAMQQVLSGRGELHHGEVYLVGGGPGDPDLLTFRALRLMQQADVCVYDKLVSKEVMALVRRDAELIYVGKSRDQHTLPQEDINQLLVRLAKEGKRVLRLKGGDPFIFGRGGEEIETLMENGIPFQVVPGITAANGVSSYAGIPLTHRDYAQSCLFTTGHLKDGSVNLDWDALVRPNQTVVIYMGLVGLPEICRQMVAHGAPENLPIAIVQQGTTQRQRVVEGTLATLPGLVERAGLRAPCLIIVGQVVRLREKLAWFAPSPEVVSAG</sequence>
<dbReference type="EC" id="2.1.1.107" evidence="1"/>
<dbReference type="EC" id="1.3.1.76" evidence="1"/>
<dbReference type="EC" id="4.99.1.4" evidence="1"/>
<dbReference type="EMBL" id="CP000284">
    <property type="protein sequence ID" value="ABE48922.1"/>
    <property type="status" value="ALT_INIT"/>
    <property type="molecule type" value="Genomic_DNA"/>
</dbReference>
<dbReference type="RefSeq" id="WP_048811535.1">
    <property type="nucleotide sequence ID" value="NC_007947.1"/>
</dbReference>
<dbReference type="SMR" id="Q1H3L5"/>
<dbReference type="STRING" id="265072.Mfla_0652"/>
<dbReference type="KEGG" id="mfa:Mfla_0652"/>
<dbReference type="eggNOG" id="COG0007">
    <property type="taxonomic scope" value="Bacteria"/>
</dbReference>
<dbReference type="eggNOG" id="COG1648">
    <property type="taxonomic scope" value="Bacteria"/>
</dbReference>
<dbReference type="HOGENOM" id="CLU_011276_2_1_4"/>
<dbReference type="OrthoDB" id="9815856at2"/>
<dbReference type="UniPathway" id="UPA00148">
    <property type="reaction ID" value="UER00211"/>
</dbReference>
<dbReference type="UniPathway" id="UPA00148">
    <property type="reaction ID" value="UER00222"/>
</dbReference>
<dbReference type="UniPathway" id="UPA00262">
    <property type="reaction ID" value="UER00211"/>
</dbReference>
<dbReference type="UniPathway" id="UPA00262">
    <property type="reaction ID" value="UER00222"/>
</dbReference>
<dbReference type="UniPathway" id="UPA00262">
    <property type="reaction ID" value="UER00376"/>
</dbReference>
<dbReference type="Proteomes" id="UP000002440">
    <property type="component" value="Chromosome"/>
</dbReference>
<dbReference type="GO" id="GO:0051287">
    <property type="term" value="F:NAD binding"/>
    <property type="evidence" value="ECO:0007669"/>
    <property type="project" value="InterPro"/>
</dbReference>
<dbReference type="GO" id="GO:0043115">
    <property type="term" value="F:precorrin-2 dehydrogenase activity"/>
    <property type="evidence" value="ECO:0007669"/>
    <property type="project" value="UniProtKB-UniRule"/>
</dbReference>
<dbReference type="GO" id="GO:0051266">
    <property type="term" value="F:sirohydrochlorin ferrochelatase activity"/>
    <property type="evidence" value="ECO:0007669"/>
    <property type="project" value="UniProtKB-EC"/>
</dbReference>
<dbReference type="GO" id="GO:0004851">
    <property type="term" value="F:uroporphyrin-III C-methyltransferase activity"/>
    <property type="evidence" value="ECO:0007669"/>
    <property type="project" value="UniProtKB-UniRule"/>
</dbReference>
<dbReference type="GO" id="GO:0009236">
    <property type="term" value="P:cobalamin biosynthetic process"/>
    <property type="evidence" value="ECO:0007669"/>
    <property type="project" value="UniProtKB-UniRule"/>
</dbReference>
<dbReference type="GO" id="GO:0032259">
    <property type="term" value="P:methylation"/>
    <property type="evidence" value="ECO:0007669"/>
    <property type="project" value="UniProtKB-KW"/>
</dbReference>
<dbReference type="GO" id="GO:0019354">
    <property type="term" value="P:siroheme biosynthetic process"/>
    <property type="evidence" value="ECO:0007669"/>
    <property type="project" value="UniProtKB-UniRule"/>
</dbReference>
<dbReference type="CDD" id="cd11642">
    <property type="entry name" value="SUMT"/>
    <property type="match status" value="1"/>
</dbReference>
<dbReference type="FunFam" id="3.30.160.110:FF:000001">
    <property type="entry name" value="Siroheme synthase"/>
    <property type="match status" value="1"/>
</dbReference>
<dbReference type="FunFam" id="3.30.950.10:FF:000001">
    <property type="entry name" value="Siroheme synthase"/>
    <property type="match status" value="1"/>
</dbReference>
<dbReference type="FunFam" id="3.40.1010.10:FF:000001">
    <property type="entry name" value="Siroheme synthase"/>
    <property type="match status" value="1"/>
</dbReference>
<dbReference type="Gene3D" id="3.40.1010.10">
    <property type="entry name" value="Cobalt-precorrin-4 Transmethylase, Domain 1"/>
    <property type="match status" value="1"/>
</dbReference>
<dbReference type="Gene3D" id="3.30.950.10">
    <property type="entry name" value="Methyltransferase, Cobalt-precorrin-4 Transmethylase, Domain 2"/>
    <property type="match status" value="1"/>
</dbReference>
<dbReference type="Gene3D" id="3.40.50.720">
    <property type="entry name" value="NAD(P)-binding Rossmann-like Domain"/>
    <property type="match status" value="1"/>
</dbReference>
<dbReference type="Gene3D" id="1.10.8.210">
    <property type="entry name" value="Sirohaem synthase, dimerisation domain"/>
    <property type="match status" value="1"/>
</dbReference>
<dbReference type="Gene3D" id="3.30.160.110">
    <property type="entry name" value="Siroheme synthase, domain 2"/>
    <property type="match status" value="1"/>
</dbReference>
<dbReference type="HAMAP" id="MF_01646">
    <property type="entry name" value="Siroheme_synth"/>
    <property type="match status" value="1"/>
</dbReference>
<dbReference type="InterPro" id="IPR000878">
    <property type="entry name" value="4pyrrol_Mease"/>
</dbReference>
<dbReference type="InterPro" id="IPR035996">
    <property type="entry name" value="4pyrrol_Methylase_sf"/>
</dbReference>
<dbReference type="InterPro" id="IPR014777">
    <property type="entry name" value="4pyrrole_Mease_sub1"/>
</dbReference>
<dbReference type="InterPro" id="IPR014776">
    <property type="entry name" value="4pyrrole_Mease_sub2"/>
</dbReference>
<dbReference type="InterPro" id="IPR006366">
    <property type="entry name" value="CobA/CysG_C"/>
</dbReference>
<dbReference type="InterPro" id="IPR036291">
    <property type="entry name" value="NAD(P)-bd_dom_sf"/>
</dbReference>
<dbReference type="InterPro" id="IPR050161">
    <property type="entry name" value="Siro_Cobalamin_biosynth"/>
</dbReference>
<dbReference type="InterPro" id="IPR037115">
    <property type="entry name" value="Sirohaem_synt_dimer_dom_sf"/>
</dbReference>
<dbReference type="InterPro" id="IPR012409">
    <property type="entry name" value="Sirohaem_synth"/>
</dbReference>
<dbReference type="InterPro" id="IPR028281">
    <property type="entry name" value="Sirohaem_synthase_central"/>
</dbReference>
<dbReference type="InterPro" id="IPR019478">
    <property type="entry name" value="Sirohaem_synthase_dimer_dom"/>
</dbReference>
<dbReference type="InterPro" id="IPR006367">
    <property type="entry name" value="Sirohaem_synthase_N"/>
</dbReference>
<dbReference type="InterPro" id="IPR003043">
    <property type="entry name" value="Uropor_MeTrfase_CS"/>
</dbReference>
<dbReference type="NCBIfam" id="TIGR01469">
    <property type="entry name" value="cobA_cysG_Cterm"/>
    <property type="match status" value="1"/>
</dbReference>
<dbReference type="NCBIfam" id="TIGR01470">
    <property type="entry name" value="cysG_Nterm"/>
    <property type="match status" value="1"/>
</dbReference>
<dbReference type="NCBIfam" id="NF004790">
    <property type="entry name" value="PRK06136.1"/>
    <property type="match status" value="1"/>
</dbReference>
<dbReference type="NCBIfam" id="NF007922">
    <property type="entry name" value="PRK10637.1"/>
    <property type="match status" value="1"/>
</dbReference>
<dbReference type="PANTHER" id="PTHR45790:SF1">
    <property type="entry name" value="SIROHEME SYNTHASE"/>
    <property type="match status" value="1"/>
</dbReference>
<dbReference type="PANTHER" id="PTHR45790">
    <property type="entry name" value="SIROHEME SYNTHASE-RELATED"/>
    <property type="match status" value="1"/>
</dbReference>
<dbReference type="Pfam" id="PF10414">
    <property type="entry name" value="CysG_dimeriser"/>
    <property type="match status" value="1"/>
</dbReference>
<dbReference type="Pfam" id="PF13241">
    <property type="entry name" value="NAD_binding_7"/>
    <property type="match status" value="1"/>
</dbReference>
<dbReference type="Pfam" id="PF14824">
    <property type="entry name" value="Sirohm_synth_M"/>
    <property type="match status" value="1"/>
</dbReference>
<dbReference type="Pfam" id="PF00590">
    <property type="entry name" value="TP_methylase"/>
    <property type="match status" value="1"/>
</dbReference>
<dbReference type="PIRSF" id="PIRSF036426">
    <property type="entry name" value="Sirohaem_synth"/>
    <property type="match status" value="1"/>
</dbReference>
<dbReference type="SUPFAM" id="SSF51735">
    <property type="entry name" value="NAD(P)-binding Rossmann-fold domains"/>
    <property type="match status" value="1"/>
</dbReference>
<dbReference type="SUPFAM" id="SSF75615">
    <property type="entry name" value="Siroheme synthase middle domains-like"/>
    <property type="match status" value="1"/>
</dbReference>
<dbReference type="SUPFAM" id="SSF53790">
    <property type="entry name" value="Tetrapyrrole methylase"/>
    <property type="match status" value="1"/>
</dbReference>
<dbReference type="PROSITE" id="PS00840">
    <property type="entry name" value="SUMT_2"/>
    <property type="match status" value="1"/>
</dbReference>
<evidence type="ECO:0000255" key="1">
    <source>
        <dbReference type="HAMAP-Rule" id="MF_01646"/>
    </source>
</evidence>
<evidence type="ECO:0000305" key="2"/>
<accession>Q1H3L5</accession>
<proteinExistence type="inferred from homology"/>
<reference key="1">
    <citation type="submission" date="2006-03" db="EMBL/GenBank/DDBJ databases">
        <title>Complete sequence of Methylobacillus flagellatus KT.</title>
        <authorList>
            <consortium name="US DOE Joint Genome Institute"/>
            <person name="Copeland A."/>
            <person name="Lucas S."/>
            <person name="Lapidus A."/>
            <person name="Barry K."/>
            <person name="Detter J.C."/>
            <person name="Glavina del Rio T."/>
            <person name="Hammon N."/>
            <person name="Israni S."/>
            <person name="Dalin E."/>
            <person name="Tice H."/>
            <person name="Pitluck S."/>
            <person name="Brettin T."/>
            <person name="Bruce D."/>
            <person name="Han C."/>
            <person name="Tapia R."/>
            <person name="Saunders E."/>
            <person name="Gilna P."/>
            <person name="Schmutz J."/>
            <person name="Larimer F."/>
            <person name="Land M."/>
            <person name="Kyrpides N."/>
            <person name="Anderson I."/>
            <person name="Richardson P."/>
        </authorList>
    </citation>
    <scope>NUCLEOTIDE SEQUENCE [LARGE SCALE GENOMIC DNA]</scope>
    <source>
        <strain>ATCC 51484 / DSM 6875 / VKM B-1610 / KT</strain>
    </source>
</reference>
<feature type="chain" id="PRO_0000330521" description="Siroheme synthase">
    <location>
        <begin position="1"/>
        <end position="467"/>
    </location>
</feature>
<feature type="region of interest" description="Precorrin-2 dehydrogenase /sirohydrochlorin ferrochelatase" evidence="1">
    <location>
        <begin position="1"/>
        <end position="203"/>
    </location>
</feature>
<feature type="region of interest" description="Uroporphyrinogen-III C-methyltransferase" evidence="1">
    <location>
        <begin position="216"/>
        <end position="467"/>
    </location>
</feature>
<feature type="active site" description="Proton acceptor" evidence="1">
    <location>
        <position position="248"/>
    </location>
</feature>
<feature type="active site" description="Proton donor" evidence="1">
    <location>
        <position position="270"/>
    </location>
</feature>
<feature type="binding site" evidence="1">
    <location>
        <begin position="22"/>
        <end position="23"/>
    </location>
    <ligand>
        <name>NAD(+)</name>
        <dbReference type="ChEBI" id="CHEBI:57540"/>
    </ligand>
</feature>
<feature type="binding site" evidence="1">
    <location>
        <begin position="43"/>
        <end position="44"/>
    </location>
    <ligand>
        <name>NAD(+)</name>
        <dbReference type="ChEBI" id="CHEBI:57540"/>
    </ligand>
</feature>
<feature type="binding site" evidence="1">
    <location>
        <position position="225"/>
    </location>
    <ligand>
        <name>S-adenosyl-L-methionine</name>
        <dbReference type="ChEBI" id="CHEBI:59789"/>
    </ligand>
</feature>
<feature type="binding site" evidence="1">
    <location>
        <begin position="301"/>
        <end position="303"/>
    </location>
    <ligand>
        <name>S-adenosyl-L-methionine</name>
        <dbReference type="ChEBI" id="CHEBI:59789"/>
    </ligand>
</feature>
<feature type="binding site" evidence="1">
    <location>
        <position position="306"/>
    </location>
    <ligand>
        <name>S-adenosyl-L-methionine</name>
        <dbReference type="ChEBI" id="CHEBI:59789"/>
    </ligand>
</feature>
<feature type="binding site" evidence="1">
    <location>
        <begin position="331"/>
        <end position="332"/>
    </location>
    <ligand>
        <name>S-adenosyl-L-methionine</name>
        <dbReference type="ChEBI" id="CHEBI:59789"/>
    </ligand>
</feature>
<feature type="binding site" evidence="1">
    <location>
        <position position="383"/>
    </location>
    <ligand>
        <name>S-adenosyl-L-methionine</name>
        <dbReference type="ChEBI" id="CHEBI:59789"/>
    </ligand>
</feature>
<feature type="binding site" evidence="1">
    <location>
        <position position="412"/>
    </location>
    <ligand>
        <name>S-adenosyl-L-methionine</name>
        <dbReference type="ChEBI" id="CHEBI:59789"/>
    </ligand>
</feature>
<feature type="modified residue" description="Phosphoserine" evidence="1">
    <location>
        <position position="128"/>
    </location>
</feature>